<dbReference type="EC" id="2.3.2.27"/>
<dbReference type="EMBL" id="AB026638">
    <property type="protein sequence ID" value="BAB11278.1"/>
    <property type="molecule type" value="Genomic_DNA"/>
</dbReference>
<dbReference type="EMBL" id="AB026639">
    <property type="protein sequence ID" value="BAB11278.1"/>
    <property type="status" value="JOINED"/>
    <property type="molecule type" value="Genomic_DNA"/>
</dbReference>
<dbReference type="EMBL" id="CP002688">
    <property type="protein sequence ID" value="AED98064.1"/>
    <property type="molecule type" value="Genomic_DNA"/>
</dbReference>
<dbReference type="RefSeq" id="NP_201353.4">
    <molecule id="Q9FGD7-2"/>
    <property type="nucleotide sequence ID" value="NM_125948.4"/>
</dbReference>
<dbReference type="SMR" id="Q9FGD7"/>
<dbReference type="STRING" id="3702.Q9FGD7"/>
<dbReference type="PaxDb" id="3702-AT5G65500.1"/>
<dbReference type="EnsemblPlants" id="AT5G65500.1">
    <molecule id="Q9FGD7-2"/>
    <property type="protein sequence ID" value="AT5G65500.1"/>
    <property type="gene ID" value="AT5G65500"/>
</dbReference>
<dbReference type="GeneID" id="836676"/>
<dbReference type="Gramene" id="AT5G65500.1">
    <molecule id="Q9FGD7-2"/>
    <property type="protein sequence ID" value="AT5G65500.1"/>
    <property type="gene ID" value="AT5G65500"/>
</dbReference>
<dbReference type="KEGG" id="ath:AT5G65500"/>
<dbReference type="Araport" id="AT5G65500"/>
<dbReference type="TAIR" id="AT5G65500"/>
<dbReference type="eggNOG" id="ENOG502QST6">
    <property type="taxonomic scope" value="Eukaryota"/>
</dbReference>
<dbReference type="InParanoid" id="Q9FGD7"/>
<dbReference type="OMA" id="HPHLIAM"/>
<dbReference type="PhylomeDB" id="Q9FGD7"/>
<dbReference type="UniPathway" id="UPA00143"/>
<dbReference type="PRO" id="PR:Q9FGD7"/>
<dbReference type="Proteomes" id="UP000006548">
    <property type="component" value="Chromosome 5"/>
</dbReference>
<dbReference type="ExpressionAtlas" id="Q9FGD7">
    <property type="expression patterns" value="baseline and differential"/>
</dbReference>
<dbReference type="GO" id="GO:0005524">
    <property type="term" value="F:ATP binding"/>
    <property type="evidence" value="ECO:0007669"/>
    <property type="project" value="UniProtKB-KW"/>
</dbReference>
<dbReference type="GO" id="GO:0004672">
    <property type="term" value="F:protein kinase activity"/>
    <property type="evidence" value="ECO:0007669"/>
    <property type="project" value="InterPro"/>
</dbReference>
<dbReference type="GO" id="GO:0004842">
    <property type="term" value="F:ubiquitin-protein transferase activity"/>
    <property type="evidence" value="ECO:0007669"/>
    <property type="project" value="InterPro"/>
</dbReference>
<dbReference type="GO" id="GO:0016567">
    <property type="term" value="P:protein ubiquitination"/>
    <property type="evidence" value="ECO:0007669"/>
    <property type="project" value="UniProtKB-UniPathway"/>
</dbReference>
<dbReference type="CDD" id="cd16655">
    <property type="entry name" value="RING-Ubox_WDSUB1-like"/>
    <property type="match status" value="1"/>
</dbReference>
<dbReference type="Gene3D" id="1.10.510.10">
    <property type="entry name" value="Transferase(Phosphotransferase) domain 1"/>
    <property type="match status" value="1"/>
</dbReference>
<dbReference type="Gene3D" id="3.30.40.10">
    <property type="entry name" value="Zinc/RING finger domain, C3HC4 (zinc finger)"/>
    <property type="match status" value="1"/>
</dbReference>
<dbReference type="InterPro" id="IPR011009">
    <property type="entry name" value="Kinase-like_dom_sf"/>
</dbReference>
<dbReference type="InterPro" id="IPR000719">
    <property type="entry name" value="Prot_kinase_dom"/>
</dbReference>
<dbReference type="InterPro" id="IPR001245">
    <property type="entry name" value="Ser-Thr/Tyr_kinase_cat_dom"/>
</dbReference>
<dbReference type="InterPro" id="IPR051348">
    <property type="entry name" value="U-box_ubiquitin_ligases"/>
</dbReference>
<dbReference type="InterPro" id="IPR003613">
    <property type="entry name" value="Ubox_domain"/>
</dbReference>
<dbReference type="InterPro" id="IPR013083">
    <property type="entry name" value="Znf_RING/FYVE/PHD"/>
</dbReference>
<dbReference type="PANTHER" id="PTHR45647">
    <property type="entry name" value="OS02G0152300 PROTEIN"/>
    <property type="match status" value="1"/>
</dbReference>
<dbReference type="PANTHER" id="PTHR45647:SF56">
    <property type="entry name" value="U-BOX DOMAIN-CONTAINING PROTEIN 50-RELATED"/>
    <property type="match status" value="1"/>
</dbReference>
<dbReference type="Pfam" id="PF07714">
    <property type="entry name" value="PK_Tyr_Ser-Thr"/>
    <property type="match status" value="1"/>
</dbReference>
<dbReference type="Pfam" id="PF04564">
    <property type="entry name" value="U-box"/>
    <property type="match status" value="1"/>
</dbReference>
<dbReference type="SMART" id="SM00504">
    <property type="entry name" value="Ubox"/>
    <property type="match status" value="1"/>
</dbReference>
<dbReference type="SUPFAM" id="SSF56112">
    <property type="entry name" value="Protein kinase-like (PK-like)"/>
    <property type="match status" value="1"/>
</dbReference>
<dbReference type="SUPFAM" id="SSF57850">
    <property type="entry name" value="RING/U-box"/>
    <property type="match status" value="1"/>
</dbReference>
<dbReference type="PROSITE" id="PS50011">
    <property type="entry name" value="PROTEIN_KINASE_DOM"/>
    <property type="match status" value="1"/>
</dbReference>
<dbReference type="PROSITE" id="PS51698">
    <property type="entry name" value="U_BOX"/>
    <property type="match status" value="1"/>
</dbReference>
<gene>
    <name type="primary">PUB50</name>
    <name type="ordered locus">At5g65500</name>
    <name type="ORF">K19O4.3</name>
</gene>
<evidence type="ECO:0000250" key="1"/>
<evidence type="ECO:0000255" key="2"/>
<evidence type="ECO:0000255" key="3">
    <source>
        <dbReference type="PROSITE-ProRule" id="PRU00159"/>
    </source>
</evidence>
<evidence type="ECO:0000305" key="4"/>
<reference key="1">
    <citation type="submission" date="1999-04" db="EMBL/GenBank/DDBJ databases">
        <title>Structural analysis of Arabidopsis thaliana chromosome 5. XI.</title>
        <authorList>
            <person name="Kaneko T."/>
            <person name="Katoh T."/>
            <person name="Asamizu E."/>
            <person name="Sato S."/>
            <person name="Nakamura Y."/>
            <person name="Kotani H."/>
            <person name="Tabata S."/>
        </authorList>
    </citation>
    <scope>NUCLEOTIDE SEQUENCE [LARGE SCALE GENOMIC DNA]</scope>
    <source>
        <strain>cv. Columbia</strain>
    </source>
</reference>
<reference key="2">
    <citation type="journal article" date="2017" name="Plant J.">
        <title>Araport11: a complete reannotation of the Arabidopsis thaliana reference genome.</title>
        <authorList>
            <person name="Cheng C.Y."/>
            <person name="Krishnakumar V."/>
            <person name="Chan A.P."/>
            <person name="Thibaud-Nissen F."/>
            <person name="Schobel S."/>
            <person name="Town C.D."/>
        </authorList>
    </citation>
    <scope>GENOME REANNOTATION</scope>
    <source>
        <strain>cv. Columbia</strain>
    </source>
</reference>
<feature type="chain" id="PRO_0000322143" description="Putative U-box domain-containing protein 50">
    <location>
        <begin position="1"/>
        <end position="765"/>
    </location>
</feature>
<feature type="domain" description="Protein kinase" evidence="3">
    <location>
        <begin position="422"/>
        <end position="765"/>
    </location>
</feature>
<feature type="domain" description="U-box">
    <location>
        <begin position="688"/>
        <end position="762"/>
    </location>
</feature>
<feature type="coiled-coil region" evidence="2">
    <location>
        <begin position="198"/>
        <end position="391"/>
    </location>
</feature>
<feature type="binding site" evidence="3">
    <location>
        <begin position="428"/>
        <end position="436"/>
    </location>
    <ligand>
        <name>ATP</name>
        <dbReference type="ChEBI" id="CHEBI:30616"/>
    </ligand>
</feature>
<feature type="binding site" evidence="3">
    <location>
        <position position="449"/>
    </location>
    <ligand>
        <name>ATP</name>
        <dbReference type="ChEBI" id="CHEBI:30616"/>
    </ligand>
</feature>
<feature type="splice variant" id="VSP_042251" description="In isoform 2." evidence="4">
    <original>CPLSVNFVLFG</original>
    <variation>KAELLKVEKQHDSIQVLILDLISKLRITKLVMGITFMRSSSSW</variation>
    <location>
        <begin position="107"/>
        <end position="117"/>
    </location>
</feature>
<feature type="splice variant" id="VSP_059309" description="In isoform 2." evidence="4">
    <original>DVAEKLEYVR</original>
    <variation>VKIL</variation>
    <location>
        <begin position="240"/>
        <end position="249"/>
    </location>
</feature>
<sequence>MEETKTHELEVEAESGSRMEKVYIAVGNDVQEGYKTIHWALKKWNNIPISIVLLHLCNISQDFVYTPFGKLPASSVSEEKLQVLRKYEDQKIDKLLSKYITFCGKVCPLSVNFVLFGKSKSAISGSFYVYQNKPEFCEFYIICGGKMVSLKNDVNNNNSNIRSWIGKMFHDPGRNLDRSSGNNDDPTASGSSWDKNLQEIENYFQQLLSLNLAEEETENVVEEEQEDDDDVALNVLQHMDVAEKLEYVRRKVNEAKLMIDEKSREVKVNAERSNRAEWAISLCNSRIGEFEAWIKEESERREKLQATLDSDKECIEEAKNYVEKGKTKLHSLAELQEVLSSKVKTMMEAKSQAEVELERVVLQRGEMITEIEKLRSQRDVFNRRIEFCKEREVIGSVSKEEVKCGYREYVAEDIRLATETYSDRLRLKSGGNWTNVYRGRIKHTTVAVKVIGDSLSDEAFGAKVKLLNEIRHPNLVAIAGFCSQRPKCLLFEYMHNGNLRDNLFTSQRKSRRSKILKWHDRIRIAHQVCSGLGFLHSVKPKPIVHGRLTPSKILLDRNLVPKITGFGLIMHSDQSDTKPDVMAFGVLLLHLLTGRNWHGLLKAMSMNQTSILRDLDQTAGKWPLELAKEFGALAVKCSSVNRGGNMDFSTKEIMEELGKIREKADEFKTKGGYEEATNSNMDEGDPNDIPSVFMCPILQEVMKNPHVAADGFSYELEAIQEWLSMGHDTSPMTNLRLDYQMLTPNHTLRSLIQDWHSKRAAQASS</sequence>
<comment type="function">
    <text evidence="1">Functions as an E3 ubiquitin ligase.</text>
</comment>
<comment type="catalytic activity">
    <reaction>
        <text>S-ubiquitinyl-[E2 ubiquitin-conjugating enzyme]-L-cysteine + [acceptor protein]-L-lysine = [E2 ubiquitin-conjugating enzyme]-L-cysteine + N(6)-ubiquitinyl-[acceptor protein]-L-lysine.</text>
        <dbReference type="EC" id="2.3.2.27"/>
    </reaction>
</comment>
<comment type="pathway">
    <text>Protein modification; protein ubiquitination.</text>
</comment>
<comment type="alternative products">
    <event type="alternative splicing"/>
    <isoform>
        <id>Q9FGD7-1</id>
        <name>1</name>
        <sequence type="displayed"/>
    </isoform>
    <isoform>
        <id>Q9FGD7-2</id>
        <name>2</name>
        <sequence type="described" ref="VSP_042251 VSP_059309"/>
    </isoform>
</comment>
<comment type="domain">
    <text>The protein kinase domain is predicted to be catalytically inactive.</text>
</comment>
<comment type="similarity">
    <text evidence="3">Belongs to the protein kinase superfamily. Ser/Thr protein kinase family.</text>
</comment>
<name>PUB50_ARATH</name>
<organism>
    <name type="scientific">Arabidopsis thaliana</name>
    <name type="common">Mouse-ear cress</name>
    <dbReference type="NCBI Taxonomy" id="3702"/>
    <lineage>
        <taxon>Eukaryota</taxon>
        <taxon>Viridiplantae</taxon>
        <taxon>Streptophyta</taxon>
        <taxon>Embryophyta</taxon>
        <taxon>Tracheophyta</taxon>
        <taxon>Spermatophyta</taxon>
        <taxon>Magnoliopsida</taxon>
        <taxon>eudicotyledons</taxon>
        <taxon>Gunneridae</taxon>
        <taxon>Pentapetalae</taxon>
        <taxon>rosids</taxon>
        <taxon>malvids</taxon>
        <taxon>Brassicales</taxon>
        <taxon>Brassicaceae</taxon>
        <taxon>Camelineae</taxon>
        <taxon>Arabidopsis</taxon>
    </lineage>
</organism>
<proteinExistence type="inferred from homology"/>
<protein>
    <recommendedName>
        <fullName>Putative U-box domain-containing protein 50</fullName>
        <ecNumber>2.3.2.27</ecNumber>
    </recommendedName>
    <alternativeName>
        <fullName>Plant U-box protein 50</fullName>
    </alternativeName>
    <alternativeName>
        <fullName evidence="4">RING-type E3 ubiquitin transferase PUB50</fullName>
    </alternativeName>
</protein>
<keyword id="KW-0025">Alternative splicing</keyword>
<keyword id="KW-0067">ATP-binding</keyword>
<keyword id="KW-0175">Coiled coil</keyword>
<keyword id="KW-0547">Nucleotide-binding</keyword>
<keyword id="KW-1185">Reference proteome</keyword>
<keyword id="KW-0808">Transferase</keyword>
<keyword id="KW-0833">Ubl conjugation pathway</keyword>
<accession>Q9FGD7</accession>
<accession>F4KHZ7</accession>